<dbReference type="EMBL" id="AJ938182">
    <property type="protein sequence ID" value="CAI80318.1"/>
    <property type="molecule type" value="Genomic_DNA"/>
</dbReference>
<dbReference type="RefSeq" id="WP_000148822.1">
    <property type="nucleotide sequence ID" value="NC_007622.1"/>
</dbReference>
<dbReference type="SMR" id="Q2YSQ0"/>
<dbReference type="KEGG" id="sab:SAB0630c"/>
<dbReference type="HOGENOM" id="CLU_106619_0_0_9"/>
<dbReference type="HAMAP" id="MF_00489">
    <property type="entry name" value="UPF0178"/>
    <property type="match status" value="1"/>
</dbReference>
<dbReference type="InterPro" id="IPR003791">
    <property type="entry name" value="UPF0178"/>
</dbReference>
<dbReference type="NCBIfam" id="NF001095">
    <property type="entry name" value="PRK00124.1"/>
    <property type="match status" value="1"/>
</dbReference>
<dbReference type="PANTHER" id="PTHR35146">
    <property type="entry name" value="UPF0178 PROTEIN YAII"/>
    <property type="match status" value="1"/>
</dbReference>
<dbReference type="PANTHER" id="PTHR35146:SF1">
    <property type="entry name" value="UPF0178 PROTEIN YAII"/>
    <property type="match status" value="1"/>
</dbReference>
<dbReference type="Pfam" id="PF02639">
    <property type="entry name" value="DUF188"/>
    <property type="match status" value="1"/>
</dbReference>
<feature type="chain" id="PRO_0000241834" description="UPF0178 protein SAB0630c">
    <location>
        <begin position="1"/>
        <end position="152"/>
    </location>
</feature>
<comment type="similarity">
    <text evidence="1">Belongs to the UPF0178 family.</text>
</comment>
<organism>
    <name type="scientific">Staphylococcus aureus (strain bovine RF122 / ET3-1)</name>
    <dbReference type="NCBI Taxonomy" id="273036"/>
    <lineage>
        <taxon>Bacteria</taxon>
        <taxon>Bacillati</taxon>
        <taxon>Bacillota</taxon>
        <taxon>Bacilli</taxon>
        <taxon>Bacillales</taxon>
        <taxon>Staphylococcaceae</taxon>
        <taxon>Staphylococcus</taxon>
    </lineage>
</organism>
<evidence type="ECO:0000255" key="1">
    <source>
        <dbReference type="HAMAP-Rule" id="MF_00489"/>
    </source>
</evidence>
<protein>
    <recommendedName>
        <fullName evidence="1">UPF0178 protein SAB0630c</fullName>
    </recommendedName>
</protein>
<proteinExistence type="inferred from homology"/>
<name>Y630_STAAB</name>
<gene>
    <name type="ordered locus">SAB0630c</name>
</gene>
<accession>Q2YSQ0</accession>
<sequence>MTHIIIDGDACPVVDSIIDLTTETGIFVTIIRSFSHFSNQLYPPHVSTLYVDDGPDAVDYKIVQLSTKDDIVITQDYGLASLLVDKVLIVMHHNGKIYNSKNIQQLLDKRYMNAQIRKQGGRHKGPPPFTKQDQKVFEQSLLKVIHRIKELD</sequence>
<reference key="1">
    <citation type="journal article" date="2007" name="PLoS ONE">
        <title>Molecular correlates of host specialization in Staphylococcus aureus.</title>
        <authorList>
            <person name="Herron-Olson L."/>
            <person name="Fitzgerald J.R."/>
            <person name="Musser J.M."/>
            <person name="Kapur V."/>
        </authorList>
    </citation>
    <scope>NUCLEOTIDE SEQUENCE [LARGE SCALE GENOMIC DNA]</scope>
    <source>
        <strain>bovine RF122 / ET3-1</strain>
    </source>
</reference>